<protein>
    <recommendedName>
        <fullName evidence="3">Polygalacturonan/rhamnogalacturonan-binding protein YtcQ</fullName>
    </recommendedName>
</protein>
<sequence>MGNKWRVLLIVLVLALGGVLAGCKGTDQSSAEGKAGPDSKVKLSWMAILYHQQPPKDRAIKEIEKLTNTELDITWVPDAVKEDRLNAALAAGNLPQIVTIQDIKNSSVMNAFRSGMFWEIGDYIKDYPNLNKMNKLINKNVTIDGKLYGIYRERPLSRQGIVIRKDWLDNLNLKTPKTLDELYEVAKAFTEDDPDKDGKDDTFGLADRNDLIYGAFKTIGSYEGMPTDWKESGGKFTPDFMTQEYKDTMNYMKKLRDNGYMNKDFPVTSKTQQQELFSQGKAGIYIGNMVDAVNLRDHASDKSMKLEIINRIKGPDGKERVWASGGHNGVFAFPKTSVKTEAELKRILAFFDRIAEEDVYSLMTYGIDGVHYNKGEDKTFTRKESQVKDWQTDIQPLSALIAIDKAYLKNTGDPLRTAYEELTEDNEKIIVSNPAESLYSASESERGDELKKIIDDATYKYMIGDITESQFDKEVEKWESSGGKQIIQEYEEAFKQAK</sequence>
<dbReference type="EMBL" id="AF008220">
    <property type="protein sequence ID" value="AAC00269.1"/>
    <property type="status" value="ALT_FRAME"/>
    <property type="molecule type" value="Genomic_DNA"/>
</dbReference>
<dbReference type="EMBL" id="AL009126">
    <property type="protein sequence ID" value="CAB14994.3"/>
    <property type="molecule type" value="Genomic_DNA"/>
</dbReference>
<dbReference type="PIR" id="H69989">
    <property type="entry name" value="H69989"/>
</dbReference>
<dbReference type="RefSeq" id="NP_390894.3">
    <property type="nucleotide sequence ID" value="NC_000964.3"/>
</dbReference>
<dbReference type="RefSeq" id="WP_004398776.1">
    <property type="nucleotide sequence ID" value="NZ_OZ025638.1"/>
</dbReference>
<dbReference type="SMR" id="Q795R2"/>
<dbReference type="FunCoup" id="Q795R2">
    <property type="interactions" value="35"/>
</dbReference>
<dbReference type="STRING" id="224308.BSU30160"/>
<dbReference type="PaxDb" id="224308-BSU30160"/>
<dbReference type="EnsemblBacteria" id="CAB14994">
    <property type="protein sequence ID" value="CAB14994"/>
    <property type="gene ID" value="BSU_30160"/>
</dbReference>
<dbReference type="GeneID" id="938090"/>
<dbReference type="KEGG" id="bsu:BSU30160"/>
<dbReference type="PATRIC" id="fig|224308.179.peg.3272"/>
<dbReference type="eggNOG" id="COG1653">
    <property type="taxonomic scope" value="Bacteria"/>
</dbReference>
<dbReference type="InParanoid" id="Q795R2"/>
<dbReference type="OrthoDB" id="9787283at2"/>
<dbReference type="PhylomeDB" id="Q795R2"/>
<dbReference type="BioCyc" id="BSUB:BSU30160-MONOMER"/>
<dbReference type="Proteomes" id="UP000001570">
    <property type="component" value="Chromosome"/>
</dbReference>
<dbReference type="GO" id="GO:0005886">
    <property type="term" value="C:plasma membrane"/>
    <property type="evidence" value="ECO:0007669"/>
    <property type="project" value="UniProtKB-SubCell"/>
</dbReference>
<dbReference type="Gene3D" id="3.40.190.10">
    <property type="entry name" value="Periplasmic binding protein-like II"/>
    <property type="match status" value="2"/>
</dbReference>
<dbReference type="InterPro" id="IPR050490">
    <property type="entry name" value="Bact_solute-bd_prot1"/>
</dbReference>
<dbReference type="InterPro" id="IPR006059">
    <property type="entry name" value="SBP"/>
</dbReference>
<dbReference type="PANTHER" id="PTHR43649">
    <property type="entry name" value="ARABINOSE-BINDING PROTEIN-RELATED"/>
    <property type="match status" value="1"/>
</dbReference>
<dbReference type="PANTHER" id="PTHR43649:SF33">
    <property type="entry name" value="POLYGALACTURONAN_RHAMNOGALACTURONAN-BINDING PROTEIN YTCQ"/>
    <property type="match status" value="1"/>
</dbReference>
<dbReference type="Pfam" id="PF13416">
    <property type="entry name" value="SBP_bac_8"/>
    <property type="match status" value="1"/>
</dbReference>
<dbReference type="SUPFAM" id="SSF53850">
    <property type="entry name" value="Periplasmic binding protein-like II"/>
    <property type="match status" value="1"/>
</dbReference>
<dbReference type="PROSITE" id="PS51257">
    <property type="entry name" value="PROKAR_LIPOPROTEIN"/>
    <property type="match status" value="1"/>
</dbReference>
<proteinExistence type="evidence at protein level"/>
<name>YTCQ_BACSU</name>
<feature type="signal peptide" evidence="1">
    <location>
        <begin position="1"/>
        <end position="22"/>
    </location>
</feature>
<feature type="chain" id="PRO_0000377721" description="Polygalacturonan/rhamnogalacturonan-binding protein YtcQ">
    <location>
        <begin position="23"/>
        <end position="498"/>
    </location>
</feature>
<feature type="lipid moiety-binding region" description="N-palmitoyl cysteine" evidence="1">
    <location>
        <position position="23"/>
    </location>
</feature>
<feature type="lipid moiety-binding region" description="S-diacylglycerol cysteine" evidence="1">
    <location>
        <position position="23"/>
    </location>
</feature>
<reference key="1">
    <citation type="journal article" date="1997" name="Microbiology">
        <title>Sequencing and functional annotation of the Bacillus subtilis genes in the 200 kb rrnB-dnaB region.</title>
        <authorList>
            <person name="Lapidus A."/>
            <person name="Galleron N."/>
            <person name="Sorokin A."/>
            <person name="Ehrlich S.D."/>
        </authorList>
    </citation>
    <scope>NUCLEOTIDE SEQUENCE [GENOMIC DNA]</scope>
    <source>
        <strain>168</strain>
    </source>
</reference>
<reference key="2">
    <citation type="journal article" date="1997" name="Nature">
        <title>The complete genome sequence of the Gram-positive bacterium Bacillus subtilis.</title>
        <authorList>
            <person name="Kunst F."/>
            <person name="Ogasawara N."/>
            <person name="Moszer I."/>
            <person name="Albertini A.M."/>
            <person name="Alloni G."/>
            <person name="Azevedo V."/>
            <person name="Bertero M.G."/>
            <person name="Bessieres P."/>
            <person name="Bolotin A."/>
            <person name="Borchert S."/>
            <person name="Borriss R."/>
            <person name="Boursier L."/>
            <person name="Brans A."/>
            <person name="Braun M."/>
            <person name="Brignell S.C."/>
            <person name="Bron S."/>
            <person name="Brouillet S."/>
            <person name="Bruschi C.V."/>
            <person name="Caldwell B."/>
            <person name="Capuano V."/>
            <person name="Carter N.M."/>
            <person name="Choi S.-K."/>
            <person name="Codani J.-J."/>
            <person name="Connerton I.F."/>
            <person name="Cummings N.J."/>
            <person name="Daniel R.A."/>
            <person name="Denizot F."/>
            <person name="Devine K.M."/>
            <person name="Duesterhoeft A."/>
            <person name="Ehrlich S.D."/>
            <person name="Emmerson P.T."/>
            <person name="Entian K.-D."/>
            <person name="Errington J."/>
            <person name="Fabret C."/>
            <person name="Ferrari E."/>
            <person name="Foulger D."/>
            <person name="Fritz C."/>
            <person name="Fujita M."/>
            <person name="Fujita Y."/>
            <person name="Fuma S."/>
            <person name="Galizzi A."/>
            <person name="Galleron N."/>
            <person name="Ghim S.-Y."/>
            <person name="Glaser P."/>
            <person name="Goffeau A."/>
            <person name="Golightly E.J."/>
            <person name="Grandi G."/>
            <person name="Guiseppi G."/>
            <person name="Guy B.J."/>
            <person name="Haga K."/>
            <person name="Haiech J."/>
            <person name="Harwood C.R."/>
            <person name="Henaut A."/>
            <person name="Hilbert H."/>
            <person name="Holsappel S."/>
            <person name="Hosono S."/>
            <person name="Hullo M.-F."/>
            <person name="Itaya M."/>
            <person name="Jones L.-M."/>
            <person name="Joris B."/>
            <person name="Karamata D."/>
            <person name="Kasahara Y."/>
            <person name="Klaerr-Blanchard M."/>
            <person name="Klein C."/>
            <person name="Kobayashi Y."/>
            <person name="Koetter P."/>
            <person name="Koningstein G."/>
            <person name="Krogh S."/>
            <person name="Kumano M."/>
            <person name="Kurita K."/>
            <person name="Lapidus A."/>
            <person name="Lardinois S."/>
            <person name="Lauber J."/>
            <person name="Lazarevic V."/>
            <person name="Lee S.-M."/>
            <person name="Levine A."/>
            <person name="Liu H."/>
            <person name="Masuda S."/>
            <person name="Mauel C."/>
            <person name="Medigue C."/>
            <person name="Medina N."/>
            <person name="Mellado R.P."/>
            <person name="Mizuno M."/>
            <person name="Moestl D."/>
            <person name="Nakai S."/>
            <person name="Noback M."/>
            <person name="Noone D."/>
            <person name="O'Reilly M."/>
            <person name="Ogawa K."/>
            <person name="Ogiwara A."/>
            <person name="Oudega B."/>
            <person name="Park S.-H."/>
            <person name="Parro V."/>
            <person name="Pohl T.M."/>
            <person name="Portetelle D."/>
            <person name="Porwollik S."/>
            <person name="Prescott A.M."/>
            <person name="Presecan E."/>
            <person name="Pujic P."/>
            <person name="Purnelle B."/>
            <person name="Rapoport G."/>
            <person name="Rey M."/>
            <person name="Reynolds S."/>
            <person name="Rieger M."/>
            <person name="Rivolta C."/>
            <person name="Rocha E."/>
            <person name="Roche B."/>
            <person name="Rose M."/>
            <person name="Sadaie Y."/>
            <person name="Sato T."/>
            <person name="Scanlan E."/>
            <person name="Schleich S."/>
            <person name="Schroeter R."/>
            <person name="Scoffone F."/>
            <person name="Sekiguchi J."/>
            <person name="Sekowska A."/>
            <person name="Seror S.J."/>
            <person name="Serror P."/>
            <person name="Shin B.-S."/>
            <person name="Soldo B."/>
            <person name="Sorokin A."/>
            <person name="Tacconi E."/>
            <person name="Takagi T."/>
            <person name="Takahashi H."/>
            <person name="Takemaru K."/>
            <person name="Takeuchi M."/>
            <person name="Tamakoshi A."/>
            <person name="Tanaka T."/>
            <person name="Terpstra P."/>
            <person name="Tognoni A."/>
            <person name="Tosato V."/>
            <person name="Uchiyama S."/>
            <person name="Vandenbol M."/>
            <person name="Vannier F."/>
            <person name="Vassarotti A."/>
            <person name="Viari A."/>
            <person name="Wambutt R."/>
            <person name="Wedler E."/>
            <person name="Wedler H."/>
            <person name="Weitzenegger T."/>
            <person name="Winters P."/>
            <person name="Wipat A."/>
            <person name="Yamamoto H."/>
            <person name="Yamane K."/>
            <person name="Yasumoto K."/>
            <person name="Yata K."/>
            <person name="Yoshida K."/>
            <person name="Yoshikawa H.-F."/>
            <person name="Zumstein E."/>
            <person name="Yoshikawa H."/>
            <person name="Danchin A."/>
        </authorList>
    </citation>
    <scope>NUCLEOTIDE SEQUENCE [LARGE SCALE GENOMIC DNA]</scope>
    <source>
        <strain>168</strain>
    </source>
</reference>
<reference key="3">
    <citation type="journal article" date="2009" name="Microbiology">
        <title>From a consortium sequence to a unified sequence: the Bacillus subtilis 168 reference genome a decade later.</title>
        <authorList>
            <person name="Barbe V."/>
            <person name="Cruveiller S."/>
            <person name="Kunst F."/>
            <person name="Lenoble P."/>
            <person name="Meurice G."/>
            <person name="Sekowska A."/>
            <person name="Vallenet D."/>
            <person name="Wang T."/>
            <person name="Moszer I."/>
            <person name="Medigue C."/>
            <person name="Danchin A."/>
        </authorList>
    </citation>
    <scope>SEQUENCE REVISION TO N-TERMINUS</scope>
</reference>
<reference key="4">
    <citation type="journal article" date="2017" name="PLoS ONE">
        <title>The MsmX ATPase plays a crucial role in pectin mobilization by Bacillus subtilis.</title>
        <authorList>
            <person name="Ferreira M.J."/>
            <person name="Mendes A.L."/>
            <person name="de Sa-Nogueira I."/>
        </authorList>
    </citation>
    <scope>FUNCTION</scope>
    <scope>SUBUNIT</scope>
    <scope>DISRUPTION PHENOTYPE</scope>
</reference>
<organism>
    <name type="scientific">Bacillus subtilis (strain 168)</name>
    <dbReference type="NCBI Taxonomy" id="224308"/>
    <lineage>
        <taxon>Bacteria</taxon>
        <taxon>Bacillati</taxon>
        <taxon>Bacillota</taxon>
        <taxon>Bacilli</taxon>
        <taxon>Bacillales</taxon>
        <taxon>Bacillaceae</taxon>
        <taxon>Bacillus</taxon>
    </lineage>
</organism>
<gene>
    <name type="primary">ytcQ</name>
    <name type="ordered locus">BSU30160</name>
</gene>
<accession>Q795R2</accession>
<accession>O34936</accession>
<evidence type="ECO:0000255" key="1">
    <source>
        <dbReference type="PROSITE-ProRule" id="PRU00303"/>
    </source>
</evidence>
<evidence type="ECO:0000269" key="2">
    <source>
    </source>
</evidence>
<evidence type="ECO:0000305" key="3"/>
<keyword id="KW-1003">Cell membrane</keyword>
<keyword id="KW-0449">Lipoprotein</keyword>
<keyword id="KW-0472">Membrane</keyword>
<keyword id="KW-0564">Palmitate</keyword>
<keyword id="KW-1185">Reference proteome</keyword>
<keyword id="KW-0732">Signal</keyword>
<keyword id="KW-0762">Sugar transport</keyword>
<keyword id="KW-0813">Transport</keyword>
<comment type="function">
    <text evidence="2">Involved in pectin degradation (PubMed:29240795). Part of the ABC transporter complex YtcQP-YteP involved in the uptake of polygalacturonan and rhamnogalacturonan type I (PubMed:29240795).</text>
</comment>
<comment type="subunit">
    <text evidence="2">The complex is probably composed of two ATP-binding proteins (MsmX), two transmembrane proteins (YtcP and YteP) and a solute-binding protein (YtcQ).</text>
</comment>
<comment type="subcellular location">
    <subcellularLocation>
        <location evidence="3">Cell membrane</location>
        <topology evidence="3">Lipid-anchor</topology>
    </subcellularLocation>
</comment>
<comment type="disruption phenotype">
    <text evidence="2">Deletion of the gene has a negative impact in the utilization of polygalacturonan and rhamnogalacturonan type I.</text>
</comment>
<comment type="similarity">
    <text evidence="3">Belongs to the bacterial solute-binding protein 1 family.</text>
</comment>
<comment type="sequence caution" evidence="3">
    <conflict type="frameshift">
        <sequence resource="EMBL-CDS" id="AAC00269"/>
    </conflict>
</comment>